<evidence type="ECO:0000255" key="1"/>
<evidence type="ECO:0000305" key="2"/>
<evidence type="ECO:0000305" key="3">
    <source>
    </source>
</evidence>
<accession>Q08533</accession>
<name>YO146_YEAST</name>
<feature type="chain" id="PRO_0000299753" description="Putative uncharacterized protein YOR146W">
    <location>
        <begin position="1"/>
        <end position="101"/>
    </location>
</feature>
<feature type="transmembrane region" description="Helical" evidence="1">
    <location>
        <begin position="70"/>
        <end position="90"/>
    </location>
</feature>
<proteinExistence type="uncertain"/>
<gene>
    <name type="ordered locus">YOR146W</name>
    <name type="ORF">O3518</name>
</gene>
<sequence length="101" mass="10736">MIFLDSNFILLPCVLLAEVKRGFPWSSTTTVLDSCVFRLPSSPSTSSFAVLLSESSNRTSSSSSSSMLSVLFIPIILLLPPSCPLTGVTVAFFKAVGATIM</sequence>
<protein>
    <recommendedName>
        <fullName>Putative uncharacterized protein YOR146W</fullName>
    </recommendedName>
</protein>
<keyword id="KW-0472">Membrane</keyword>
<keyword id="KW-0812">Transmembrane</keyword>
<keyword id="KW-1133">Transmembrane helix</keyword>
<organism>
    <name type="scientific">Saccharomyces cerevisiae (strain ATCC 204508 / S288c)</name>
    <name type="common">Baker's yeast</name>
    <dbReference type="NCBI Taxonomy" id="559292"/>
    <lineage>
        <taxon>Eukaryota</taxon>
        <taxon>Fungi</taxon>
        <taxon>Dikarya</taxon>
        <taxon>Ascomycota</taxon>
        <taxon>Saccharomycotina</taxon>
        <taxon>Saccharomycetes</taxon>
        <taxon>Saccharomycetales</taxon>
        <taxon>Saccharomycetaceae</taxon>
        <taxon>Saccharomyces</taxon>
    </lineage>
</organism>
<reference key="1">
    <citation type="journal article" date="1997" name="Nature">
        <title>The nucleotide sequence of Saccharomyces cerevisiae chromosome XV.</title>
        <authorList>
            <person name="Dujon B."/>
            <person name="Albermann K."/>
            <person name="Aldea M."/>
            <person name="Alexandraki D."/>
            <person name="Ansorge W."/>
            <person name="Arino J."/>
            <person name="Benes V."/>
            <person name="Bohn C."/>
            <person name="Bolotin-Fukuhara M."/>
            <person name="Bordonne R."/>
            <person name="Boyer J."/>
            <person name="Camasses A."/>
            <person name="Casamayor A."/>
            <person name="Casas C."/>
            <person name="Cheret G."/>
            <person name="Cziepluch C."/>
            <person name="Daignan-Fornier B."/>
            <person name="Dang V.-D."/>
            <person name="de Haan M."/>
            <person name="Delius H."/>
            <person name="Durand P."/>
            <person name="Fairhead C."/>
            <person name="Feldmann H."/>
            <person name="Gaillon L."/>
            <person name="Galisson F."/>
            <person name="Gamo F.-J."/>
            <person name="Gancedo C."/>
            <person name="Goffeau A."/>
            <person name="Goulding S.E."/>
            <person name="Grivell L.A."/>
            <person name="Habbig B."/>
            <person name="Hand N.J."/>
            <person name="Hani J."/>
            <person name="Hattenhorst U."/>
            <person name="Hebling U."/>
            <person name="Hernando Y."/>
            <person name="Herrero E."/>
            <person name="Heumann K."/>
            <person name="Hiesel R."/>
            <person name="Hilger F."/>
            <person name="Hofmann B."/>
            <person name="Hollenberg C.P."/>
            <person name="Hughes B."/>
            <person name="Jauniaux J.-C."/>
            <person name="Kalogeropoulos A."/>
            <person name="Katsoulou C."/>
            <person name="Kordes E."/>
            <person name="Lafuente M.J."/>
            <person name="Landt O."/>
            <person name="Louis E.J."/>
            <person name="Maarse A.C."/>
            <person name="Madania A."/>
            <person name="Mannhaupt G."/>
            <person name="Marck C."/>
            <person name="Martin R.P."/>
            <person name="Mewes H.-W."/>
            <person name="Michaux G."/>
            <person name="Paces V."/>
            <person name="Parle-McDermott A.G."/>
            <person name="Pearson B.M."/>
            <person name="Perrin A."/>
            <person name="Pettersson B."/>
            <person name="Poch O."/>
            <person name="Pohl T.M."/>
            <person name="Poirey R."/>
            <person name="Portetelle D."/>
            <person name="Pujol A."/>
            <person name="Purnelle B."/>
            <person name="Ramezani Rad M."/>
            <person name="Rechmann S."/>
            <person name="Schwager C."/>
            <person name="Schweizer M."/>
            <person name="Sor F."/>
            <person name="Sterky F."/>
            <person name="Tarassov I.A."/>
            <person name="Teodoru C."/>
            <person name="Tettelin H."/>
            <person name="Thierry A."/>
            <person name="Tobiasch E."/>
            <person name="Tzermia M."/>
            <person name="Uhlen M."/>
            <person name="Unseld M."/>
            <person name="Valens M."/>
            <person name="Vandenbol M."/>
            <person name="Vetter I."/>
            <person name="Vlcek C."/>
            <person name="Voet M."/>
            <person name="Volckaert G."/>
            <person name="Voss H."/>
            <person name="Wambutt R."/>
            <person name="Wedler H."/>
            <person name="Wiemann S."/>
            <person name="Winsor B."/>
            <person name="Wolfe K.H."/>
            <person name="Zollner A."/>
            <person name="Zumstein E."/>
            <person name="Kleine K."/>
        </authorList>
    </citation>
    <scope>NUCLEOTIDE SEQUENCE [LARGE SCALE GENOMIC DNA]</scope>
    <source>
        <strain>ATCC 204508 / S288c</strain>
    </source>
</reference>
<reference key="2">
    <citation type="journal article" date="2014" name="G3 (Bethesda)">
        <title>The reference genome sequence of Saccharomyces cerevisiae: Then and now.</title>
        <authorList>
            <person name="Engel S.R."/>
            <person name="Dietrich F.S."/>
            <person name="Fisk D.G."/>
            <person name="Binkley G."/>
            <person name="Balakrishnan R."/>
            <person name="Costanzo M.C."/>
            <person name="Dwight S.S."/>
            <person name="Hitz B.C."/>
            <person name="Karra K."/>
            <person name="Nash R.S."/>
            <person name="Weng S."/>
            <person name="Wong E.D."/>
            <person name="Lloyd P."/>
            <person name="Skrzypek M.S."/>
            <person name="Miyasato S.R."/>
            <person name="Simison M."/>
            <person name="Cherry J.M."/>
        </authorList>
    </citation>
    <scope>GENOME REANNOTATION</scope>
    <source>
        <strain>ATCC 204508 / S288c</strain>
    </source>
</reference>
<reference key="3">
    <citation type="journal article" date="2007" name="Genome Res.">
        <title>Approaching a complete repository of sequence-verified protein-encoding clones for Saccharomyces cerevisiae.</title>
        <authorList>
            <person name="Hu Y."/>
            <person name="Rolfs A."/>
            <person name="Bhullar B."/>
            <person name="Murthy T.V.S."/>
            <person name="Zhu C."/>
            <person name="Berger M.F."/>
            <person name="Camargo A.A."/>
            <person name="Kelley F."/>
            <person name="McCarron S."/>
            <person name="Jepson D."/>
            <person name="Richardson A."/>
            <person name="Raphael J."/>
            <person name="Moreira D."/>
            <person name="Taycher E."/>
            <person name="Zuo D."/>
            <person name="Mohr S."/>
            <person name="Kane M.F."/>
            <person name="Williamson J."/>
            <person name="Simpson A.J.G."/>
            <person name="Bulyk M.L."/>
            <person name="Harlow E."/>
            <person name="Marsischky G."/>
            <person name="Kolodner R.D."/>
            <person name="LaBaer J."/>
        </authorList>
    </citation>
    <scope>NUCLEOTIDE SEQUENCE [GENOMIC DNA]</scope>
    <source>
        <strain>ATCC 204508 / S288c</strain>
    </source>
</reference>
<dbReference type="EMBL" id="Z75053">
    <property type="protein sequence ID" value="CAA99350.1"/>
    <property type="molecule type" value="Genomic_DNA"/>
</dbReference>
<dbReference type="EMBL" id="AY693352">
    <property type="protein sequence ID" value="AAT93371.1"/>
    <property type="molecule type" value="Genomic_DNA"/>
</dbReference>
<dbReference type="PIR" id="S67034">
    <property type="entry name" value="S67034"/>
</dbReference>
<dbReference type="DIP" id="DIP-4141N"/>
<dbReference type="PaxDb" id="4932-YOR146W"/>
<dbReference type="EnsemblFungi" id="YOR146W_mRNA">
    <property type="protein sequence ID" value="YOR146W"/>
    <property type="gene ID" value="YOR146W"/>
</dbReference>
<dbReference type="AGR" id="SGD:S000005672"/>
<dbReference type="SGD" id="S000005672">
    <property type="gene designation" value="YOR146W"/>
</dbReference>
<dbReference type="HOGENOM" id="CLU_2293907_0_0_1"/>
<dbReference type="GO" id="GO:0016020">
    <property type="term" value="C:membrane"/>
    <property type="evidence" value="ECO:0007669"/>
    <property type="project" value="UniProtKB-SubCell"/>
</dbReference>
<comment type="subcellular location">
    <subcellularLocation>
        <location evidence="2">Membrane</location>
        <topology evidence="2">Single-pass membrane protein</topology>
    </subcellularLocation>
</comment>
<comment type="miscellaneous">
    <text evidence="2">Almost completely overlaps PNO1.</text>
</comment>
<comment type="caution">
    <text evidence="3">Product of a dubious gene prediction unlikely to encode a functional protein. Because of that it is not part of the S.cerevisiae S288c complete/reference proteome set.</text>
</comment>